<organism>
    <name type="scientific">Pseudomonas putida (strain ATCC 47054 / DSM 6125 / CFBP 8728 / NCIMB 11950 / KT2440)</name>
    <dbReference type="NCBI Taxonomy" id="160488"/>
    <lineage>
        <taxon>Bacteria</taxon>
        <taxon>Pseudomonadati</taxon>
        <taxon>Pseudomonadota</taxon>
        <taxon>Gammaproteobacteria</taxon>
        <taxon>Pseudomonadales</taxon>
        <taxon>Pseudomonadaceae</taxon>
        <taxon>Pseudomonas</taxon>
    </lineage>
</organism>
<sequence length="559" mass="62340">MASVALVGLMSAGQLWAFNLDDVAAKAKDLAGQKYEAPKSNLPAVFRDMKFADYQKIRFLQEKAEWAKDKTPFKLSFYHQGMHFDTPVKINEVTATKVEEIKYDPDRFEFGDVPHDPETTKNLGYAGFRVLYPINKADKQDEIMTLLGASYFRVVGKGHVYGLSARGLAIDTALPSGEEFPRFTEFWVEKPKPADKHLVIYALLDSPRSTGAYKLTLRPGNDTVVDVQSRVFLRDHVSRLGIAPLTSMYLFGPNQPSKVLNYRPALHDSEGLSIHAGNGEWLWRPLNNPKHLAVSNFSVENPRGFGLMQRQRAFSDYEDLDDNYQKRPSAWIEPKGDWGKGSVDLVEIPTADETNDNIVAFWSPEKLPEPGKPFEYAYRLHWTIDEPKFQAPDLGWVKQTLRSTGDVKQSNLIRQPDGSVAFLVDFAGPALAALPEDAAVRSQISVGDNAEVVENNLRYNPETKGWRLTLRLKVKEANKSTEMRAALVRDVPVEPAKPAQDAKQDKAAAKHAKAEKAVKAEQSAKAEQPAADAAPTNGALATTEKVLTETWSYQLPADE</sequence>
<accession>Q88D03</accession>
<protein>
    <recommendedName>
        <fullName>Glucans biosynthesis protein G</fullName>
    </recommendedName>
</protein>
<keyword id="KW-0574">Periplasm</keyword>
<keyword id="KW-1185">Reference proteome</keyword>
<keyword id="KW-0732">Signal</keyword>
<evidence type="ECO:0000250" key="1"/>
<evidence type="ECO:0000255" key="2"/>
<evidence type="ECO:0000256" key="3">
    <source>
        <dbReference type="SAM" id="MobiDB-lite"/>
    </source>
</evidence>
<evidence type="ECO:0000305" key="4"/>
<gene>
    <name type="primary">opgG</name>
    <name type="synonym">mgoG</name>
    <name type="ordered locus">PP_5026</name>
</gene>
<name>OPGG_PSEPK</name>
<proteinExistence type="inferred from homology"/>
<comment type="function">
    <text evidence="1">Involved in the biosynthesis of osmoregulated periplasmic glucans (OPGs).</text>
</comment>
<comment type="pathway">
    <text>Glycan metabolism; osmoregulated periplasmic glucan (OPG) biosynthesis.</text>
</comment>
<comment type="subcellular location">
    <subcellularLocation>
        <location evidence="1">Periplasm</location>
    </subcellularLocation>
</comment>
<comment type="similarity">
    <text evidence="4">Belongs to the OpgD/OpgG family.</text>
</comment>
<feature type="signal peptide" evidence="2">
    <location>
        <begin position="1"/>
        <end position="17"/>
    </location>
</feature>
<feature type="chain" id="PRO_0000020227" description="Glucans biosynthesis protein G">
    <location>
        <begin position="18"/>
        <end position="559"/>
    </location>
</feature>
<feature type="region of interest" description="Disordered" evidence="3">
    <location>
        <begin position="492"/>
        <end position="542"/>
    </location>
</feature>
<feature type="compositionally biased region" description="Basic and acidic residues" evidence="3">
    <location>
        <begin position="500"/>
        <end position="524"/>
    </location>
</feature>
<feature type="compositionally biased region" description="Low complexity" evidence="3">
    <location>
        <begin position="525"/>
        <end position="534"/>
    </location>
</feature>
<dbReference type="EMBL" id="AE015451">
    <property type="protein sequence ID" value="AAN70591.1"/>
    <property type="molecule type" value="Genomic_DNA"/>
</dbReference>
<dbReference type="RefSeq" id="NP_747127.1">
    <property type="nucleotide sequence ID" value="NC_002947.4"/>
</dbReference>
<dbReference type="SMR" id="Q88D03"/>
<dbReference type="STRING" id="160488.PP_5026"/>
<dbReference type="PaxDb" id="160488-PP_5026"/>
<dbReference type="KEGG" id="ppu:PP_5026"/>
<dbReference type="PATRIC" id="fig|160488.4.peg.5367"/>
<dbReference type="eggNOG" id="COG3131">
    <property type="taxonomic scope" value="Bacteria"/>
</dbReference>
<dbReference type="HOGENOM" id="CLU_023403_2_0_6"/>
<dbReference type="OrthoDB" id="335750at2"/>
<dbReference type="PhylomeDB" id="Q88D03"/>
<dbReference type="BioCyc" id="PPUT160488:G1G01-5371-MONOMER"/>
<dbReference type="UniPathway" id="UPA00637"/>
<dbReference type="Proteomes" id="UP000000556">
    <property type="component" value="Chromosome"/>
</dbReference>
<dbReference type="GO" id="GO:0030288">
    <property type="term" value="C:outer membrane-bounded periplasmic space"/>
    <property type="evidence" value="ECO:0007669"/>
    <property type="project" value="TreeGrafter"/>
</dbReference>
<dbReference type="GO" id="GO:0030246">
    <property type="term" value="F:carbohydrate binding"/>
    <property type="evidence" value="ECO:0007669"/>
    <property type="project" value="InterPro"/>
</dbReference>
<dbReference type="GO" id="GO:0003824">
    <property type="term" value="F:catalytic activity"/>
    <property type="evidence" value="ECO:0007669"/>
    <property type="project" value="InterPro"/>
</dbReference>
<dbReference type="GO" id="GO:0051274">
    <property type="term" value="P:beta-glucan biosynthetic process"/>
    <property type="evidence" value="ECO:0007669"/>
    <property type="project" value="TreeGrafter"/>
</dbReference>
<dbReference type="FunFam" id="2.70.98.10:FF:000001">
    <property type="entry name" value="Glucans biosynthesis protein G"/>
    <property type="match status" value="1"/>
</dbReference>
<dbReference type="Gene3D" id="2.70.98.10">
    <property type="match status" value="1"/>
</dbReference>
<dbReference type="Gene3D" id="2.60.40.10">
    <property type="entry name" value="Immunoglobulins"/>
    <property type="match status" value="1"/>
</dbReference>
<dbReference type="HAMAP" id="MF_01069">
    <property type="entry name" value="MdoG_OpgG"/>
    <property type="match status" value="1"/>
</dbReference>
<dbReference type="InterPro" id="IPR011013">
    <property type="entry name" value="Gal_mutarotase_sf_dom"/>
</dbReference>
<dbReference type="InterPro" id="IPR014718">
    <property type="entry name" value="GH-type_carb-bd"/>
</dbReference>
<dbReference type="InterPro" id="IPR014438">
    <property type="entry name" value="Glucan_biosyn_MdoG/MdoD"/>
</dbReference>
<dbReference type="InterPro" id="IPR007444">
    <property type="entry name" value="Glucan_biosyn_MdoG_C"/>
</dbReference>
<dbReference type="InterPro" id="IPR013783">
    <property type="entry name" value="Ig-like_fold"/>
</dbReference>
<dbReference type="InterPro" id="IPR014756">
    <property type="entry name" value="Ig_E-set"/>
</dbReference>
<dbReference type="InterPro" id="IPR023704">
    <property type="entry name" value="MdoG_OpgG"/>
</dbReference>
<dbReference type="PANTHER" id="PTHR30504">
    <property type="entry name" value="GLUCANS BIOSYNTHESIS PROTEIN"/>
    <property type="match status" value="1"/>
</dbReference>
<dbReference type="PANTHER" id="PTHR30504:SF4">
    <property type="entry name" value="GLUCANS BIOSYNTHESIS PROTEIN G"/>
    <property type="match status" value="1"/>
</dbReference>
<dbReference type="Pfam" id="PF04349">
    <property type="entry name" value="MdoG"/>
    <property type="match status" value="1"/>
</dbReference>
<dbReference type="PIRSF" id="PIRSF006281">
    <property type="entry name" value="MdoG"/>
    <property type="match status" value="1"/>
</dbReference>
<dbReference type="SUPFAM" id="SSF81296">
    <property type="entry name" value="E set domains"/>
    <property type="match status" value="1"/>
</dbReference>
<dbReference type="SUPFAM" id="SSF74650">
    <property type="entry name" value="Galactose mutarotase-like"/>
    <property type="match status" value="1"/>
</dbReference>
<reference key="1">
    <citation type="journal article" date="2002" name="Environ. Microbiol.">
        <title>Complete genome sequence and comparative analysis of the metabolically versatile Pseudomonas putida KT2440.</title>
        <authorList>
            <person name="Nelson K.E."/>
            <person name="Weinel C."/>
            <person name="Paulsen I.T."/>
            <person name="Dodson R.J."/>
            <person name="Hilbert H."/>
            <person name="Martins dos Santos V.A.P."/>
            <person name="Fouts D.E."/>
            <person name="Gill S.R."/>
            <person name="Pop M."/>
            <person name="Holmes M."/>
            <person name="Brinkac L.M."/>
            <person name="Beanan M.J."/>
            <person name="DeBoy R.T."/>
            <person name="Daugherty S.C."/>
            <person name="Kolonay J.F."/>
            <person name="Madupu R."/>
            <person name="Nelson W.C."/>
            <person name="White O."/>
            <person name="Peterson J.D."/>
            <person name="Khouri H.M."/>
            <person name="Hance I."/>
            <person name="Chris Lee P."/>
            <person name="Holtzapple E.K."/>
            <person name="Scanlan D."/>
            <person name="Tran K."/>
            <person name="Moazzez A."/>
            <person name="Utterback T.R."/>
            <person name="Rizzo M."/>
            <person name="Lee K."/>
            <person name="Kosack D."/>
            <person name="Moestl D."/>
            <person name="Wedler H."/>
            <person name="Lauber J."/>
            <person name="Stjepandic D."/>
            <person name="Hoheisel J."/>
            <person name="Straetz M."/>
            <person name="Heim S."/>
            <person name="Kiewitz C."/>
            <person name="Eisen J.A."/>
            <person name="Timmis K.N."/>
            <person name="Duesterhoeft A."/>
            <person name="Tuemmler B."/>
            <person name="Fraser C.M."/>
        </authorList>
    </citation>
    <scope>NUCLEOTIDE SEQUENCE [LARGE SCALE GENOMIC DNA]</scope>
    <source>
        <strain>ATCC 47054 / DSM 6125 / CFBP 8728 / NCIMB 11950 / KT2440</strain>
    </source>
</reference>